<name>SSUD_ECOK1</name>
<protein>
    <recommendedName>
        <fullName evidence="1">Alkanesulfonate monooxygenase</fullName>
        <ecNumber evidence="1">1.14.14.5</ecNumber>
    </recommendedName>
    <alternativeName>
        <fullName evidence="1">FMNH2-dependent aliphatic sulfonate monooxygenase</fullName>
    </alternativeName>
</protein>
<comment type="function">
    <text evidence="1">Catalyzes the desulfonation of aliphatic sulfonates.</text>
</comment>
<comment type="catalytic activity">
    <reaction evidence="1">
        <text>an alkanesulfonate + FMNH2 + O2 = an aldehyde + FMN + sulfite + H2O + 2 H(+)</text>
        <dbReference type="Rhea" id="RHEA:23064"/>
        <dbReference type="ChEBI" id="CHEBI:15377"/>
        <dbReference type="ChEBI" id="CHEBI:15378"/>
        <dbReference type="ChEBI" id="CHEBI:15379"/>
        <dbReference type="ChEBI" id="CHEBI:17359"/>
        <dbReference type="ChEBI" id="CHEBI:17478"/>
        <dbReference type="ChEBI" id="CHEBI:57618"/>
        <dbReference type="ChEBI" id="CHEBI:58210"/>
        <dbReference type="ChEBI" id="CHEBI:134249"/>
        <dbReference type="EC" id="1.14.14.5"/>
    </reaction>
</comment>
<comment type="subunit">
    <text evidence="1">Homotetramer.</text>
</comment>
<comment type="miscellaneous">
    <text evidence="1">FMNH(2) which is absolutely required for this enzymatic reaction, is provided by SsuE.</text>
</comment>
<comment type="similarity">
    <text evidence="1">Belongs to the SsuD family.</text>
</comment>
<gene>
    <name evidence="1" type="primary">ssuD</name>
    <name type="ordered locus">Ecok1_08580</name>
    <name type="ORF">APECO1_47</name>
</gene>
<keyword id="KW-0285">Flavoprotein</keyword>
<keyword id="KW-0288">FMN</keyword>
<keyword id="KW-0503">Monooxygenase</keyword>
<keyword id="KW-0560">Oxidoreductase</keyword>
<keyword id="KW-1185">Reference proteome</keyword>
<dbReference type="EC" id="1.14.14.5" evidence="1"/>
<dbReference type="EMBL" id="CP000468">
    <property type="protein sequence ID" value="ABJ00352.1"/>
    <property type="molecule type" value="Genomic_DNA"/>
</dbReference>
<dbReference type="RefSeq" id="WP_000055976.1">
    <property type="nucleotide sequence ID" value="NZ_CADILS010000016.1"/>
</dbReference>
<dbReference type="SMR" id="A1A9L2"/>
<dbReference type="KEGG" id="ecv:APECO1_47"/>
<dbReference type="HOGENOM" id="CLU_027853_1_0_6"/>
<dbReference type="Proteomes" id="UP000008216">
    <property type="component" value="Chromosome"/>
</dbReference>
<dbReference type="GO" id="GO:0008726">
    <property type="term" value="F:alkanesulfonate monooxygenase activity"/>
    <property type="evidence" value="ECO:0007669"/>
    <property type="project" value="UniProtKB-UniRule"/>
</dbReference>
<dbReference type="GO" id="GO:0046306">
    <property type="term" value="P:alkanesulfonate catabolic process"/>
    <property type="evidence" value="ECO:0007669"/>
    <property type="project" value="TreeGrafter"/>
</dbReference>
<dbReference type="CDD" id="cd01094">
    <property type="entry name" value="Alkanesulfonate_monoxygenase"/>
    <property type="match status" value="1"/>
</dbReference>
<dbReference type="FunFam" id="3.20.20.30:FF:000001">
    <property type="entry name" value="Alkanesulfonate monooxygenase"/>
    <property type="match status" value="1"/>
</dbReference>
<dbReference type="Gene3D" id="3.20.20.30">
    <property type="entry name" value="Luciferase-like domain"/>
    <property type="match status" value="1"/>
</dbReference>
<dbReference type="HAMAP" id="MF_01229">
    <property type="entry name" value="Alkanesulf_monooxygen"/>
    <property type="match status" value="1"/>
</dbReference>
<dbReference type="InterPro" id="IPR019911">
    <property type="entry name" value="Alkanesulphonate_mOase_FMN-dep"/>
</dbReference>
<dbReference type="InterPro" id="IPR011251">
    <property type="entry name" value="Luciferase-like_dom"/>
</dbReference>
<dbReference type="InterPro" id="IPR036661">
    <property type="entry name" value="Luciferase-like_sf"/>
</dbReference>
<dbReference type="InterPro" id="IPR050172">
    <property type="entry name" value="SsuD_RutA_monooxygenase"/>
</dbReference>
<dbReference type="NCBIfam" id="TIGR03565">
    <property type="entry name" value="alk_sulf_monoox"/>
    <property type="match status" value="1"/>
</dbReference>
<dbReference type="NCBIfam" id="NF001939">
    <property type="entry name" value="PRK00719.1"/>
    <property type="match status" value="1"/>
</dbReference>
<dbReference type="PANTHER" id="PTHR42847">
    <property type="entry name" value="ALKANESULFONATE MONOOXYGENASE"/>
    <property type="match status" value="1"/>
</dbReference>
<dbReference type="PANTHER" id="PTHR42847:SF4">
    <property type="entry name" value="ALKANESULFONATE MONOOXYGENASE-RELATED"/>
    <property type="match status" value="1"/>
</dbReference>
<dbReference type="Pfam" id="PF00296">
    <property type="entry name" value="Bac_luciferase"/>
    <property type="match status" value="1"/>
</dbReference>
<dbReference type="SUPFAM" id="SSF51679">
    <property type="entry name" value="Bacterial luciferase-like"/>
    <property type="match status" value="1"/>
</dbReference>
<proteinExistence type="inferred from homology"/>
<reference key="1">
    <citation type="journal article" date="2007" name="J. Bacteriol.">
        <title>The genome sequence of avian pathogenic Escherichia coli strain O1:K1:H7 shares strong similarities with human extraintestinal pathogenic E. coli genomes.</title>
        <authorList>
            <person name="Johnson T.J."/>
            <person name="Kariyawasam S."/>
            <person name="Wannemuehler Y."/>
            <person name="Mangiamele P."/>
            <person name="Johnson S.J."/>
            <person name="Doetkott C."/>
            <person name="Skyberg J.A."/>
            <person name="Lynne A.M."/>
            <person name="Johnson J.R."/>
            <person name="Nolan L.K."/>
        </authorList>
    </citation>
    <scope>NUCLEOTIDE SEQUENCE [LARGE SCALE GENOMIC DNA]</scope>
</reference>
<feature type="chain" id="PRO_1000066821" description="Alkanesulfonate monooxygenase">
    <location>
        <begin position="1"/>
        <end position="381"/>
    </location>
</feature>
<organism>
    <name type="scientific">Escherichia coli O1:K1 / APEC</name>
    <dbReference type="NCBI Taxonomy" id="405955"/>
    <lineage>
        <taxon>Bacteria</taxon>
        <taxon>Pseudomonadati</taxon>
        <taxon>Pseudomonadota</taxon>
        <taxon>Gammaproteobacteria</taxon>
        <taxon>Enterobacterales</taxon>
        <taxon>Enterobacteriaceae</taxon>
        <taxon>Escherichia</taxon>
    </lineage>
</organism>
<accession>A1A9L2</accession>
<sequence length="381" mass="41672">MSLNMFWFLPTHGDGHYLGTEEGSRPVDHGYLQQIAQAADRLGYTGVLIPTGRSCEDAWLVAASMIPVTQRLKFLVALRPSVTSPTVAARQAATLDRLSNGRALFNLVTGSDPQELAGDGVFLDHSERYEASAEFTQVWRRLLLGETVDFNGKHIHVRGAKLLFPPIQQPYPPLYFGGSSDVAQELAAEQVDLYLTWGEPPELVKEKIEHVRAKAAAHGRKIRFGVRLHVIVRETNDEAWQAAERLISRLDDETIAKAQAAFARTDSVGQQRMAALHNGKRDNLEISPNLWAGVGLVRGGAGTALVGDGPTVAARINEYAALGIDSFVLSGYPHLEEAYRVGELLFPHLDVAIPEIPQPQPLNPQGEAVANDFIPRNVAQS</sequence>
<evidence type="ECO:0000255" key="1">
    <source>
        <dbReference type="HAMAP-Rule" id="MF_01229"/>
    </source>
</evidence>